<accession>P00936</accession>
<accession>Q2M8B1</accession>
<dbReference type="EC" id="4.6.1.1"/>
<dbReference type="EMBL" id="X01653">
    <property type="protein sequence ID" value="CAA25817.1"/>
    <property type="molecule type" value="Genomic_DNA"/>
</dbReference>
<dbReference type="EMBL" id="X66782">
    <property type="protein sequence ID" value="CAA47280.1"/>
    <property type="molecule type" value="Genomic_DNA"/>
</dbReference>
<dbReference type="EMBL" id="M87049">
    <property type="protein sequence ID" value="AAA67602.1"/>
    <property type="molecule type" value="Genomic_DNA"/>
</dbReference>
<dbReference type="EMBL" id="U00096">
    <property type="protein sequence ID" value="AAC76809.1"/>
    <property type="molecule type" value="Genomic_DNA"/>
</dbReference>
<dbReference type="EMBL" id="AP009048">
    <property type="protein sequence ID" value="BAE77495.1"/>
    <property type="molecule type" value="Genomic_DNA"/>
</dbReference>
<dbReference type="PIR" id="G65184">
    <property type="entry name" value="OYEC"/>
</dbReference>
<dbReference type="RefSeq" id="NP_418250.1">
    <property type="nucleotide sequence ID" value="NC_000913.3"/>
</dbReference>
<dbReference type="RefSeq" id="WP_000281668.1">
    <property type="nucleotide sequence ID" value="NZ_SSZK01000025.1"/>
</dbReference>
<dbReference type="BioGRID" id="4262610">
    <property type="interactions" value="24"/>
</dbReference>
<dbReference type="BioGRID" id="852067">
    <property type="interactions" value="10"/>
</dbReference>
<dbReference type="FunCoup" id="P00936">
    <property type="interactions" value="168"/>
</dbReference>
<dbReference type="IntAct" id="P00936">
    <property type="interactions" value="23"/>
</dbReference>
<dbReference type="STRING" id="511145.b3806"/>
<dbReference type="jPOST" id="P00936"/>
<dbReference type="PaxDb" id="511145-b3806"/>
<dbReference type="EnsemblBacteria" id="AAC76809">
    <property type="protein sequence ID" value="AAC76809"/>
    <property type="gene ID" value="b3806"/>
</dbReference>
<dbReference type="GeneID" id="947755"/>
<dbReference type="KEGG" id="ecj:JW3778"/>
<dbReference type="KEGG" id="eco:b3806"/>
<dbReference type="KEGG" id="ecoc:C3026_20605"/>
<dbReference type="PATRIC" id="fig|1411691.4.peg.2902"/>
<dbReference type="EchoBASE" id="EB0168"/>
<dbReference type="eggNOG" id="COG3072">
    <property type="taxonomic scope" value="Bacteria"/>
</dbReference>
<dbReference type="HOGENOM" id="CLU_013280_0_0_6"/>
<dbReference type="InParanoid" id="P00936"/>
<dbReference type="OMA" id="YDDYVMS"/>
<dbReference type="OrthoDB" id="5571448at2"/>
<dbReference type="PhylomeDB" id="P00936"/>
<dbReference type="BioCyc" id="EcoCyc:ADENYLATECYC-MONOMER"/>
<dbReference type="BioCyc" id="MetaCyc:ADENYLATECYC-MONOMER"/>
<dbReference type="BRENDA" id="4.6.1.1">
    <property type="organism ID" value="2026"/>
</dbReference>
<dbReference type="PRO" id="PR:P00936"/>
<dbReference type="Proteomes" id="UP000000625">
    <property type="component" value="Chromosome"/>
</dbReference>
<dbReference type="GO" id="GO:0005737">
    <property type="term" value="C:cytoplasm"/>
    <property type="evidence" value="ECO:0007669"/>
    <property type="project" value="UniProtKB-SubCell"/>
</dbReference>
<dbReference type="GO" id="GO:0004016">
    <property type="term" value="F:adenylate cyclase activity"/>
    <property type="evidence" value="ECO:0000314"/>
    <property type="project" value="EcoCyc"/>
</dbReference>
<dbReference type="GO" id="GO:0005524">
    <property type="term" value="F:ATP binding"/>
    <property type="evidence" value="ECO:0007669"/>
    <property type="project" value="UniProtKB-KW"/>
</dbReference>
<dbReference type="GO" id="GO:0006171">
    <property type="term" value="P:cAMP biosynthetic process"/>
    <property type="evidence" value="ECO:0000315"/>
    <property type="project" value="EcoCyc"/>
</dbReference>
<dbReference type="InterPro" id="IPR000274">
    <property type="entry name" value="Adenylate_cyclase_1"/>
</dbReference>
<dbReference type="InterPro" id="IPR024686">
    <property type="entry name" value="Adenylate_cyclase_1_CS"/>
</dbReference>
<dbReference type="InterPro" id="IPR024685">
    <property type="entry name" value="Adenylate_cyclase_1_N"/>
</dbReference>
<dbReference type="NCBIfam" id="NF006977">
    <property type="entry name" value="PRK09450.1-1"/>
    <property type="match status" value="1"/>
</dbReference>
<dbReference type="NCBIfam" id="NF006978">
    <property type="entry name" value="PRK09450.1-2"/>
    <property type="match status" value="1"/>
</dbReference>
<dbReference type="NCBIfam" id="NF006979">
    <property type="entry name" value="PRK09450.1-4"/>
    <property type="match status" value="1"/>
</dbReference>
<dbReference type="PANTHER" id="PTHR38760">
    <property type="entry name" value="ADENYLATE CYCLASE"/>
    <property type="match status" value="1"/>
</dbReference>
<dbReference type="PANTHER" id="PTHR38760:SF1">
    <property type="entry name" value="ADENYLATE CYCLASE"/>
    <property type="match status" value="1"/>
</dbReference>
<dbReference type="Pfam" id="PF12633">
    <property type="entry name" value="Adenyl_cycl_N"/>
    <property type="match status" value="1"/>
</dbReference>
<dbReference type="Pfam" id="PF01295">
    <property type="entry name" value="Adenylate_cycl"/>
    <property type="match status" value="1"/>
</dbReference>
<dbReference type="PIRSF" id="PIRSF001444">
    <property type="entry name" value="Adenylate_cycl"/>
    <property type="match status" value="1"/>
</dbReference>
<dbReference type="PROSITE" id="PS01092">
    <property type="entry name" value="ADENYLATE_CYCLASE_1_1"/>
    <property type="match status" value="1"/>
</dbReference>
<dbReference type="PROSITE" id="PS01093">
    <property type="entry name" value="ADENYLATE_CYCLASE_1_2"/>
    <property type="match status" value="1"/>
</dbReference>
<keyword id="KW-0067">ATP-binding</keyword>
<keyword id="KW-0115">cAMP biosynthesis</keyword>
<keyword id="KW-0963">Cytoplasm</keyword>
<keyword id="KW-0456">Lyase</keyword>
<keyword id="KW-0547">Nucleotide-binding</keyword>
<keyword id="KW-0597">Phosphoprotein</keyword>
<keyword id="KW-1185">Reference proteome</keyword>
<gene>
    <name type="primary">cyaA</name>
    <name type="synonym">cya</name>
    <name type="ordered locus">b3806</name>
    <name type="ordered locus">JW3778</name>
</gene>
<comment type="function">
    <text>Catalyzes the formation of the second messenger cAMP from ATP. Its transcript is probably degraded by endoribonuclease LS (rnlA), decreasing cAMP levels and the negative regulator Crp-cAMP, which then induces its own transcription again.</text>
</comment>
<comment type="catalytic activity">
    <reaction>
        <text>ATP = 3',5'-cyclic AMP + diphosphate</text>
        <dbReference type="Rhea" id="RHEA:15389"/>
        <dbReference type="ChEBI" id="CHEBI:30616"/>
        <dbReference type="ChEBI" id="CHEBI:33019"/>
        <dbReference type="ChEBI" id="CHEBI:58165"/>
        <dbReference type="EC" id="4.6.1.1"/>
    </reaction>
</comment>
<comment type="activity regulation">
    <text>The regulatory domain is involved in the regulation of cyclase activity by the carbon source. Activated by the PTS system, glucose-specific IIA component (CRR).</text>
</comment>
<comment type="interaction">
    <interactant intactId="EBI-1116685">
        <id>P00936</id>
    </interactant>
    <interactant intactId="EBI-551473">
        <id>P15038</id>
        <label>helD</label>
    </interactant>
    <organismsDiffer>false</organismsDiffer>
    <experiments>3</experiments>
</comment>
<comment type="subcellular location">
    <subcellularLocation>
        <location>Cytoplasm</location>
    </subcellularLocation>
</comment>
<comment type="induction">
    <text evidence="2 3">Repressed by the Crp-cAMP complex. Expression increases during growth, decreasing again in stationary phase; more strongly induced in an rnlA deletion mutant, levels remain high even in stationary phase (at protein level).</text>
</comment>
<comment type="disruption phenotype">
    <text evidence="2">Not essential, eliminates the NaCl sensitivity of an rnlA deletion mutant.</text>
</comment>
<comment type="similarity">
    <text evidence="4">Belongs to the adenylyl cyclase class-1 family.</text>
</comment>
<comment type="online information" name="Escherichia coli adenylate cyclase homepage">
    <link uri="http://minst.org/ecoli_cyclase.htm"/>
</comment>
<name>CYAA_ECOLI</name>
<proteinExistence type="evidence at protein level"/>
<evidence type="ECO:0000255" key="1"/>
<evidence type="ECO:0000269" key="2">
    <source>
    </source>
</evidence>
<evidence type="ECO:0000269" key="3">
    <source>
    </source>
</evidence>
<evidence type="ECO:0000305" key="4"/>
<protein>
    <recommendedName>
        <fullName>Adenylate cyclase</fullName>
        <ecNumber>4.6.1.1</ecNumber>
    </recommendedName>
    <alternativeName>
        <fullName>ATP pyrophosphate-lyase</fullName>
    </alternativeName>
    <alternativeName>
        <fullName>Adenylyl cyclase</fullName>
    </alternativeName>
</protein>
<reference key="1">
    <citation type="journal article" date="1984" name="Nucleic Acids Res.">
        <title>The complete nucleotide sequence of the adenylate cyclase gene of Escherichia coli.</title>
        <authorList>
            <person name="Aiba H."/>
            <person name="Mori K."/>
            <person name="Tanaka M."/>
            <person name="Ooi T."/>
            <person name="Roy A."/>
            <person name="Danchin A."/>
        </authorList>
    </citation>
    <scope>NUCLEOTIDE SEQUENCE [GENOMIC DNA]</scope>
</reference>
<reference key="2">
    <citation type="journal article" date="1985" name="J. Biol. Chem.">
        <title>Transcription of the Escherichia coli adenylate cyclase gene is negatively regulated by cAMP-cAMP receptor protein.</title>
        <authorList>
            <person name="Aiba H."/>
        </authorList>
    </citation>
    <scope>NUCLEOTIDE SEQUENCE [GENOMIC DNA]</scope>
    <scope>INDUCTION</scope>
</reference>
<reference key="3">
    <citation type="journal article" date="1996" name="Biochimie">
        <title>Comparative analysis of the cya locus in enterobacteria and related Gram-negative facultative anaerobes.</title>
        <authorList>
            <person name="Trotot P."/>
            <person name="Sismeiro O."/>
            <person name="Vivares C."/>
            <person name="Glaser P."/>
            <person name="Bresson-Roy A."/>
            <person name="Danchin A."/>
        </authorList>
    </citation>
    <scope>NUCLEOTIDE SEQUENCE [GENOMIC DNA]</scope>
</reference>
<reference key="4">
    <citation type="journal article" date="1992" name="Science">
        <title>Analysis of the Escherichia coli genome: DNA sequence of the region from 84.5 to 86.5 minutes.</title>
        <authorList>
            <person name="Daniels D.L."/>
            <person name="Plunkett G. III"/>
            <person name="Burland V.D."/>
            <person name="Blattner F.R."/>
        </authorList>
    </citation>
    <scope>NUCLEOTIDE SEQUENCE [LARGE SCALE GENOMIC DNA]</scope>
    <source>
        <strain>K12 / MG1655 / ATCC 47076</strain>
    </source>
</reference>
<reference key="5">
    <citation type="journal article" date="1997" name="Science">
        <title>The complete genome sequence of Escherichia coli K-12.</title>
        <authorList>
            <person name="Blattner F.R."/>
            <person name="Plunkett G. III"/>
            <person name="Bloch C.A."/>
            <person name="Perna N.T."/>
            <person name="Burland V."/>
            <person name="Riley M."/>
            <person name="Collado-Vides J."/>
            <person name="Glasner J.D."/>
            <person name="Rode C.K."/>
            <person name="Mayhew G.F."/>
            <person name="Gregor J."/>
            <person name="Davis N.W."/>
            <person name="Kirkpatrick H.A."/>
            <person name="Goeden M.A."/>
            <person name="Rose D.J."/>
            <person name="Mau B."/>
            <person name="Shao Y."/>
        </authorList>
    </citation>
    <scope>NUCLEOTIDE SEQUENCE [LARGE SCALE GENOMIC DNA]</scope>
    <source>
        <strain>K12 / MG1655 / ATCC 47076</strain>
    </source>
</reference>
<reference key="6">
    <citation type="journal article" date="2006" name="Mol. Syst. Biol.">
        <title>Highly accurate genome sequences of Escherichia coli K-12 strains MG1655 and W3110.</title>
        <authorList>
            <person name="Hayashi K."/>
            <person name="Morooka N."/>
            <person name="Yamamoto Y."/>
            <person name="Fujita K."/>
            <person name="Isono K."/>
            <person name="Choi S."/>
            <person name="Ohtsubo E."/>
            <person name="Baba T."/>
            <person name="Wanner B.L."/>
            <person name="Mori H."/>
            <person name="Horiuchi T."/>
        </authorList>
    </citation>
    <scope>NUCLEOTIDE SEQUENCE [LARGE SCALE GENOMIC DNA]</scope>
    <source>
        <strain>K12 / W3110 / ATCC 27325 / DSM 5911</strain>
    </source>
</reference>
<reference key="7">
    <citation type="journal article" date="1983" name="EMBO J.">
        <title>Regulation of adenylate cyclase synthesis in Escherichia coli: nucleotide sequence of the control region.</title>
        <authorList>
            <person name="Roy A."/>
            <person name="Haziza C."/>
            <person name="Danchin A."/>
        </authorList>
    </citation>
    <scope>NUCLEOTIDE SEQUENCE [GENOMIC DNA] OF 1-183</scope>
</reference>
<reference key="8">
    <citation type="journal article" date="1983" name="Nucleic Acids Res.">
        <title>Cloning and promoter analysis of the Escherichia coli adenylate cyclase gene.</title>
        <authorList>
            <person name="Aiba H."/>
            <person name="Kawamukai M."/>
            <person name="Ishihama A."/>
        </authorList>
    </citation>
    <scope>NUCLEOTIDE SEQUENCE [GENOMIC DNA] OF 27-88</scope>
</reference>
<reference key="9">
    <citation type="journal article" date="2008" name="Mol. Microbiol.">
        <title>Post-transcriptional control of Crp-cAMP by RNase LS in Escherichia coli.</title>
        <authorList>
            <person name="Iwamoto A."/>
            <person name="Lemire S."/>
            <person name="Yonesaki T."/>
        </authorList>
    </citation>
    <scope>INDUCTION</scope>
    <scope>REGULATION</scope>
    <scope>DISRUPTION PHENOTYPE</scope>
    <source>
        <strain>K12</strain>
    </source>
</reference>
<reference key="10">
    <citation type="journal article" date="1993" name="Adv. Second Messenger Phosphoprotein Res.">
        <title>Phylogeny of adenylyl cyclases.</title>
        <authorList>
            <person name="Danchin A."/>
        </authorList>
    </citation>
    <scope>REVIEW</scope>
</reference>
<sequence length="848" mass="97586">MYLYIETLKQRLDAINQLRVDRALAAMGPAFQQVYSLLPTLLHYHHPLMPGYLDGNVPKGICLYTPDETQRHYLNELELYRGMSVQDPPKGELPITGVYTMGSTSSVGQSCSSDLDIWVCHQSWLDSEERQLLQRKCSLLENWAASLGVEVSFFLIDENRFRHNESGSLGGEDCGSTQHILLLDEFYRTAVRLAGKRILWNMVPCDEEEHYDDYVMTLYAQGVLTPNEWLDLGGLSSLSAEEYFGASLWQLYKSIDSPYKAVLKTLLLEAYSWEYPNPRLLAKDIKQRLHDGEIVSFGLDPYCMMLERVTEYLTAIEDFTRLDLVRRCFYLKVCEKLSRERACVGWRRAVLSQLVSEWGWDEARLAMLDNRANWKIDQVREAHNELLDAMMQSYRNLIRFARRNNLSVSASPQDIGVLTRKLYAAFEALPGKVTLVNPQISPDLSEPNLTFIYVPPGRANRSGWYLYNRAPNIESIISHQPLEYNRYLNKLVAWAWFNGLLTSRTRLYIKGNGIVDLPKLQEMVADVSHHFPLRLPAPTPKALYSPCEIRHLAIIVNLEYDPTAAFRNQVVHFDFRKLDVFSFGENQNCLVGSVDLLYRNSWNEVRTLHFNGEQSMIEALKTILGKMHQDAAPPDSVEVFCYSQHLRGLIRTRVQQLVSECIELRLSSTRQETGRFKALRVSGQTWGLFFERLNVSVQKLENAIEFYGAISHNKLHGLSVQVETNHVKLPAVVDGFASEGIIQFFFEETQDENGFNIYILDESNRVEVYHHCEGSKEELVRDVSRFYSSSHDRFTYGSSFINFNLPQFYQIVKVDGREQVIPFRTKSIGNMPPANQDHDTPLLQQYFS</sequence>
<organism>
    <name type="scientific">Escherichia coli (strain K12)</name>
    <dbReference type="NCBI Taxonomy" id="83333"/>
    <lineage>
        <taxon>Bacteria</taxon>
        <taxon>Pseudomonadati</taxon>
        <taxon>Pseudomonadota</taxon>
        <taxon>Gammaproteobacteria</taxon>
        <taxon>Enterobacterales</taxon>
        <taxon>Enterobacteriaceae</taxon>
        <taxon>Escherichia</taxon>
    </lineage>
</organism>
<feature type="chain" id="PRO_0000195669" description="Adenylate cyclase">
    <location>
        <begin position="1"/>
        <end position="848"/>
    </location>
</feature>
<feature type="region of interest" description="Catalytic">
    <location>
        <begin position="1"/>
        <end position="535"/>
    </location>
</feature>
<feature type="region of interest" description="Regulatory">
    <location>
        <begin position="541"/>
        <end position="848"/>
    </location>
</feature>
<feature type="modified residue" description="Phosphohistidine; by CRR" evidence="1">
    <location>
        <position position="609"/>
    </location>
</feature>
<feature type="sequence conflict" description="In Ref. 1; CAA25817 and 3; CAA47280." evidence="4" ref="1 3">
    <original>V</original>
    <variation>G</variation>
    <location>
        <position position="223"/>
    </location>
</feature>